<protein>
    <recommendedName>
        <fullName evidence="1">Phosphatidylserine decarboxylase proenzyme</fullName>
        <ecNumber evidence="1">4.1.1.65</ecNumber>
    </recommendedName>
    <component>
        <recommendedName>
            <fullName evidence="1">Phosphatidylserine decarboxylase alpha chain</fullName>
        </recommendedName>
    </component>
    <component>
        <recommendedName>
            <fullName evidence="1">Phosphatidylserine decarboxylase beta chain</fullName>
        </recommendedName>
    </component>
</protein>
<organism>
    <name type="scientific">Variovorax paradoxus (strain S110)</name>
    <dbReference type="NCBI Taxonomy" id="543728"/>
    <lineage>
        <taxon>Bacteria</taxon>
        <taxon>Pseudomonadati</taxon>
        <taxon>Pseudomonadota</taxon>
        <taxon>Betaproteobacteria</taxon>
        <taxon>Burkholderiales</taxon>
        <taxon>Comamonadaceae</taxon>
        <taxon>Variovorax</taxon>
    </lineage>
</organism>
<comment type="function">
    <text evidence="1">Catalyzes the formation of phosphatidylethanolamine (PtdEtn) from phosphatidylserine (PtdSer).</text>
</comment>
<comment type="catalytic activity">
    <reaction evidence="1">
        <text>a 1,2-diacyl-sn-glycero-3-phospho-L-serine + H(+) = a 1,2-diacyl-sn-glycero-3-phosphoethanolamine + CO2</text>
        <dbReference type="Rhea" id="RHEA:20828"/>
        <dbReference type="ChEBI" id="CHEBI:15378"/>
        <dbReference type="ChEBI" id="CHEBI:16526"/>
        <dbReference type="ChEBI" id="CHEBI:57262"/>
        <dbReference type="ChEBI" id="CHEBI:64612"/>
        <dbReference type="EC" id="4.1.1.65"/>
    </reaction>
</comment>
<comment type="cofactor">
    <cofactor evidence="1">
        <name>pyruvate</name>
        <dbReference type="ChEBI" id="CHEBI:15361"/>
    </cofactor>
    <text evidence="1">Binds 1 pyruvoyl group covalently per subunit.</text>
</comment>
<comment type="pathway">
    <text evidence="1">Phospholipid metabolism; phosphatidylethanolamine biosynthesis; phosphatidylethanolamine from CDP-diacylglycerol: step 2/2.</text>
</comment>
<comment type="subunit">
    <text evidence="1">Heterodimer of a large membrane-associated beta subunit and a small pyruvoyl-containing alpha subunit.</text>
</comment>
<comment type="subcellular location">
    <subcellularLocation>
        <location evidence="1">Cell membrane</location>
        <topology evidence="1">Peripheral membrane protein</topology>
    </subcellularLocation>
</comment>
<comment type="PTM">
    <text evidence="1">Is synthesized initially as an inactive proenzyme. Formation of the active enzyme involves a self-maturation process in which the active site pyruvoyl group is generated from an internal serine residue via an autocatalytic post-translational modification. Two non-identical subunits are generated from the proenzyme in this reaction, and the pyruvate is formed at the N-terminus of the alpha chain, which is derived from the carboxyl end of the proenzyme. The autoendoproteolytic cleavage occurs by a canonical serine protease mechanism, in which the side chain hydroxyl group of the serine supplies its oxygen atom to form the C-terminus of the beta chain, while the remainder of the serine residue undergoes an oxidative deamination to produce ammonia and the pyruvoyl prosthetic group on the alpha chain. During this reaction, the Ser that is part of the protease active site of the proenzyme becomes the pyruvoyl prosthetic group, which constitutes an essential element of the active site of the mature decarboxylase.</text>
</comment>
<comment type="similarity">
    <text evidence="1">Belongs to the phosphatidylserine decarboxylase family. PSD-B subfamily. Prokaryotic type I sub-subfamily.</text>
</comment>
<dbReference type="EC" id="4.1.1.65" evidence="1"/>
<dbReference type="EMBL" id="CP001635">
    <property type="protein sequence ID" value="ACS18366.1"/>
    <property type="molecule type" value="Genomic_DNA"/>
</dbReference>
<dbReference type="SMR" id="C5CU16"/>
<dbReference type="STRING" id="543728.Vapar_1716"/>
<dbReference type="KEGG" id="vap:Vapar_1716"/>
<dbReference type="eggNOG" id="COG0688">
    <property type="taxonomic scope" value="Bacteria"/>
</dbReference>
<dbReference type="HOGENOM" id="CLU_029061_4_1_4"/>
<dbReference type="OrthoDB" id="9802030at2"/>
<dbReference type="UniPathway" id="UPA00558">
    <property type="reaction ID" value="UER00616"/>
</dbReference>
<dbReference type="GO" id="GO:0005886">
    <property type="term" value="C:plasma membrane"/>
    <property type="evidence" value="ECO:0007669"/>
    <property type="project" value="UniProtKB-SubCell"/>
</dbReference>
<dbReference type="GO" id="GO:0004609">
    <property type="term" value="F:phosphatidylserine decarboxylase activity"/>
    <property type="evidence" value="ECO:0007669"/>
    <property type="project" value="UniProtKB-UniRule"/>
</dbReference>
<dbReference type="GO" id="GO:0006646">
    <property type="term" value="P:phosphatidylethanolamine biosynthetic process"/>
    <property type="evidence" value="ECO:0007669"/>
    <property type="project" value="UniProtKB-UniRule"/>
</dbReference>
<dbReference type="HAMAP" id="MF_00662">
    <property type="entry name" value="PS_decarb_PSD_B_type1"/>
    <property type="match status" value="1"/>
</dbReference>
<dbReference type="InterPro" id="IPR003817">
    <property type="entry name" value="PS_Dcarbxylase"/>
</dbReference>
<dbReference type="InterPro" id="IPR033177">
    <property type="entry name" value="PSD-B"/>
</dbReference>
<dbReference type="InterPro" id="IPR033178">
    <property type="entry name" value="PSD_type1_pro"/>
</dbReference>
<dbReference type="NCBIfam" id="TIGR00163">
    <property type="entry name" value="PS_decarb"/>
    <property type="match status" value="1"/>
</dbReference>
<dbReference type="PANTHER" id="PTHR10067">
    <property type="entry name" value="PHOSPHATIDYLSERINE DECARBOXYLASE"/>
    <property type="match status" value="1"/>
</dbReference>
<dbReference type="PANTHER" id="PTHR10067:SF6">
    <property type="entry name" value="PHOSPHATIDYLSERINE DECARBOXYLASE PROENZYME, MITOCHONDRIAL"/>
    <property type="match status" value="1"/>
</dbReference>
<dbReference type="Pfam" id="PF02666">
    <property type="entry name" value="PS_Dcarbxylase"/>
    <property type="match status" value="1"/>
</dbReference>
<accession>C5CU16</accession>
<feature type="chain" id="PRO_1000212489" description="Phosphatidylserine decarboxylase beta chain" evidence="1">
    <location>
        <begin position="1"/>
        <end position="247"/>
    </location>
</feature>
<feature type="chain" id="PRO_1000212490" description="Phosphatidylserine decarboxylase alpha chain" evidence="1">
    <location>
        <begin position="248"/>
        <end position="283"/>
    </location>
</feature>
<feature type="active site" description="Charge relay system; for autoendoproteolytic cleavage activity" evidence="1">
    <location>
        <position position="88"/>
    </location>
</feature>
<feature type="active site" description="Charge relay system; for autoendoproteolytic cleavage activity" evidence="1">
    <location>
        <position position="145"/>
    </location>
</feature>
<feature type="active site" description="Charge relay system; for autoendoproteolytic cleavage activity" evidence="1">
    <location>
        <position position="248"/>
    </location>
</feature>
<feature type="active site" description="Schiff-base intermediate with substrate; via pyruvic acid; for decarboxylase activity" evidence="1">
    <location>
        <position position="248"/>
    </location>
</feature>
<feature type="site" description="Cleavage (non-hydrolytic); by autocatalysis" evidence="1">
    <location>
        <begin position="247"/>
        <end position="248"/>
    </location>
</feature>
<feature type="modified residue" description="Pyruvic acid (Ser); by autocatalysis" evidence="1">
    <location>
        <position position="248"/>
    </location>
</feature>
<name>PSD_VARPS</name>
<reference key="1">
    <citation type="journal article" date="2011" name="J. Bacteriol.">
        <title>Complete genome sequence of the metabolically versatile plant growth-promoting endophyte, Variovorax paradoxus S110.</title>
        <authorList>
            <person name="Han J.I."/>
            <person name="Choi H.K."/>
            <person name="Lee S.W."/>
            <person name="Orwin P.M."/>
            <person name="Kim J."/>
            <person name="Laroe S.L."/>
            <person name="Kim T.G."/>
            <person name="O'Neil J."/>
            <person name="Leadbetter J.R."/>
            <person name="Lee S.Y."/>
            <person name="Hur C.G."/>
            <person name="Spain J.C."/>
            <person name="Ovchinnikova G."/>
            <person name="Goodwin L."/>
            <person name="Han C."/>
        </authorList>
    </citation>
    <scope>NUCLEOTIDE SEQUENCE [LARGE SCALE GENOMIC DNA]</scope>
    <source>
        <strain>S110</strain>
    </source>
</reference>
<evidence type="ECO:0000255" key="1">
    <source>
        <dbReference type="HAMAP-Rule" id="MF_00662"/>
    </source>
</evidence>
<keyword id="KW-1003">Cell membrane</keyword>
<keyword id="KW-0210">Decarboxylase</keyword>
<keyword id="KW-0444">Lipid biosynthesis</keyword>
<keyword id="KW-0443">Lipid metabolism</keyword>
<keyword id="KW-0456">Lyase</keyword>
<keyword id="KW-0472">Membrane</keyword>
<keyword id="KW-0594">Phospholipid biosynthesis</keyword>
<keyword id="KW-1208">Phospholipid metabolism</keyword>
<keyword id="KW-0670">Pyruvate</keyword>
<keyword id="KW-0865">Zymogen</keyword>
<sequence>MSDRSAVLPQYLFPKQALTNFAGWVAGKERGAVTTWIIRRFVAKYGVDMGEALESDINHYKSFNQFFTRALKPGVRPLAQADLVCPVDGAISQFGAIEGDQIFQAKGHNYSTTALVGGDAVLAARFAHGSFATLYLSPKDYHRIHMPCDGRLVRMIHVPGDLFSVNPVTARGVPGLFARNERVVCVFESAHGPFVLVLVGATIVGSMATVWHGVVNPPRGGELREWHYADQQILLKQGEEMGRFLLGSTVVMLFPPPPLAFNPDWAPTRPVRLGEAMANLANL</sequence>
<proteinExistence type="inferred from homology"/>
<gene>
    <name evidence="1" type="primary">psd</name>
    <name type="ordered locus">Vapar_1716</name>
</gene>